<evidence type="ECO:0000255" key="1">
    <source>
        <dbReference type="HAMAP-Rule" id="MF_00203"/>
    </source>
</evidence>
<name>UVRC_PSEA6</name>
<gene>
    <name evidence="1" type="primary">uvrC</name>
    <name type="ordered locus">Patl_2449</name>
</gene>
<reference key="1">
    <citation type="submission" date="2006-06" db="EMBL/GenBank/DDBJ databases">
        <title>Complete sequence of Pseudoalteromonas atlantica T6c.</title>
        <authorList>
            <consortium name="US DOE Joint Genome Institute"/>
            <person name="Copeland A."/>
            <person name="Lucas S."/>
            <person name="Lapidus A."/>
            <person name="Barry K."/>
            <person name="Detter J.C."/>
            <person name="Glavina del Rio T."/>
            <person name="Hammon N."/>
            <person name="Israni S."/>
            <person name="Dalin E."/>
            <person name="Tice H."/>
            <person name="Pitluck S."/>
            <person name="Saunders E."/>
            <person name="Brettin T."/>
            <person name="Bruce D."/>
            <person name="Han C."/>
            <person name="Tapia R."/>
            <person name="Gilna P."/>
            <person name="Schmutz J."/>
            <person name="Larimer F."/>
            <person name="Land M."/>
            <person name="Hauser L."/>
            <person name="Kyrpides N."/>
            <person name="Kim E."/>
            <person name="Karls A.C."/>
            <person name="Bartlett D."/>
            <person name="Higgins B.P."/>
            <person name="Richardson P."/>
        </authorList>
    </citation>
    <scope>NUCLEOTIDE SEQUENCE [LARGE SCALE GENOMIC DNA]</scope>
    <source>
        <strain>T6c / ATCC BAA-1087</strain>
    </source>
</reference>
<accession>Q15T23</accession>
<organism>
    <name type="scientific">Pseudoalteromonas atlantica (strain T6c / ATCC BAA-1087)</name>
    <dbReference type="NCBI Taxonomy" id="3042615"/>
    <lineage>
        <taxon>Bacteria</taxon>
        <taxon>Pseudomonadati</taxon>
        <taxon>Pseudomonadota</taxon>
        <taxon>Gammaproteobacteria</taxon>
        <taxon>Alteromonadales</taxon>
        <taxon>Alteromonadaceae</taxon>
        <taxon>Paraglaciecola</taxon>
    </lineage>
</organism>
<keyword id="KW-0963">Cytoplasm</keyword>
<keyword id="KW-0227">DNA damage</keyword>
<keyword id="KW-0228">DNA excision</keyword>
<keyword id="KW-0234">DNA repair</keyword>
<keyword id="KW-0267">Excision nuclease</keyword>
<keyword id="KW-0742">SOS response</keyword>
<sequence>MSDTIEFDSKAFLKDLTNQPGVYRMYNHKQDVIYVGKAKNLKNRVSSYFRSQVDSIKTQSLVKQIAHMDVTVVHSEAEAFILENNFIKKYKPRYNVLLRDDKSYPFIFLSDHQHPRLANHRGPKKRKGEYFGPYPSAWAVRESLRTMQRIFPIRQCEDSYYRARSRPCLQYQLQRCAGPCVEGLVSDEDYQAQVDLARMFLKGKNKQVIDSLVQHMERASTDLRFEAAARYRDQISALNKVQEQQWVSGNQEEMDVFGFAYRNGIASIQGLFIRDNKLLGSKSFYPKVPAEATDEEVFQSFILQFYLAGNKVIPKQIVTPLELNEQGAIEELLTKEAGRRIQFYRGARDEKRRYLDLANTNAENALIAKQGQQKSVFARYTELEKILEFEQPIQRMECFDISHTSGQLTVASCVVFNREGPFKADYRRFNIEGITPGDDYAAMAQALARRYRDVKDDSKIPDILFIDGGKGQLTQAEDYFEDWKHEKKPLLIGVAKGSSRKAGLETLILAGNHATIPLSGDSIALHLIQHIRDESHRFAITGHRARRQKDKKTSKLESIPGVGAKRRQSLLKYMGGLQGILQASRSEIANVPGISAELADTIYDHIHN</sequence>
<protein>
    <recommendedName>
        <fullName evidence="1">UvrABC system protein C</fullName>
        <shortName evidence="1">Protein UvrC</shortName>
    </recommendedName>
    <alternativeName>
        <fullName evidence="1">Excinuclease ABC subunit C</fullName>
    </alternativeName>
</protein>
<comment type="function">
    <text evidence="1">The UvrABC repair system catalyzes the recognition and processing of DNA lesions. UvrC both incises the 5' and 3' sides of the lesion. The N-terminal half is responsible for the 3' incision and the C-terminal half is responsible for the 5' incision.</text>
</comment>
<comment type="subunit">
    <text evidence="1">Interacts with UvrB in an incision complex.</text>
</comment>
<comment type="subcellular location">
    <subcellularLocation>
        <location evidence="1">Cytoplasm</location>
    </subcellularLocation>
</comment>
<comment type="similarity">
    <text evidence="1">Belongs to the UvrC family.</text>
</comment>
<proteinExistence type="inferred from homology"/>
<dbReference type="EMBL" id="CP000388">
    <property type="protein sequence ID" value="ABG40965.1"/>
    <property type="molecule type" value="Genomic_DNA"/>
</dbReference>
<dbReference type="RefSeq" id="WP_011575239.1">
    <property type="nucleotide sequence ID" value="NC_008228.1"/>
</dbReference>
<dbReference type="SMR" id="Q15T23"/>
<dbReference type="STRING" id="342610.Patl_2449"/>
<dbReference type="KEGG" id="pat:Patl_2449"/>
<dbReference type="eggNOG" id="COG0322">
    <property type="taxonomic scope" value="Bacteria"/>
</dbReference>
<dbReference type="HOGENOM" id="CLU_014841_3_2_6"/>
<dbReference type="OrthoDB" id="9804933at2"/>
<dbReference type="Proteomes" id="UP000001981">
    <property type="component" value="Chromosome"/>
</dbReference>
<dbReference type="GO" id="GO:0005737">
    <property type="term" value="C:cytoplasm"/>
    <property type="evidence" value="ECO:0007669"/>
    <property type="project" value="UniProtKB-SubCell"/>
</dbReference>
<dbReference type="GO" id="GO:0009380">
    <property type="term" value="C:excinuclease repair complex"/>
    <property type="evidence" value="ECO:0007669"/>
    <property type="project" value="InterPro"/>
</dbReference>
<dbReference type="GO" id="GO:0003677">
    <property type="term" value="F:DNA binding"/>
    <property type="evidence" value="ECO:0007669"/>
    <property type="project" value="UniProtKB-UniRule"/>
</dbReference>
<dbReference type="GO" id="GO:0009381">
    <property type="term" value="F:excinuclease ABC activity"/>
    <property type="evidence" value="ECO:0007669"/>
    <property type="project" value="UniProtKB-UniRule"/>
</dbReference>
<dbReference type="GO" id="GO:0006289">
    <property type="term" value="P:nucleotide-excision repair"/>
    <property type="evidence" value="ECO:0007669"/>
    <property type="project" value="UniProtKB-UniRule"/>
</dbReference>
<dbReference type="GO" id="GO:0009432">
    <property type="term" value="P:SOS response"/>
    <property type="evidence" value="ECO:0007669"/>
    <property type="project" value="UniProtKB-UniRule"/>
</dbReference>
<dbReference type="CDD" id="cd10434">
    <property type="entry name" value="GIY-YIG_UvrC_Cho"/>
    <property type="match status" value="1"/>
</dbReference>
<dbReference type="FunFam" id="1.10.150.20:FF:000005">
    <property type="entry name" value="UvrABC system protein C"/>
    <property type="match status" value="1"/>
</dbReference>
<dbReference type="FunFam" id="3.30.420.340:FF:000001">
    <property type="entry name" value="UvrABC system protein C"/>
    <property type="match status" value="1"/>
</dbReference>
<dbReference type="FunFam" id="3.40.1440.10:FF:000001">
    <property type="entry name" value="UvrABC system protein C"/>
    <property type="match status" value="1"/>
</dbReference>
<dbReference type="Gene3D" id="1.10.150.20">
    <property type="entry name" value="5' to 3' exonuclease, C-terminal subdomain"/>
    <property type="match status" value="1"/>
</dbReference>
<dbReference type="Gene3D" id="3.40.1440.10">
    <property type="entry name" value="GIY-YIG endonuclease"/>
    <property type="match status" value="1"/>
</dbReference>
<dbReference type="Gene3D" id="4.10.860.10">
    <property type="entry name" value="UVR domain"/>
    <property type="match status" value="1"/>
</dbReference>
<dbReference type="Gene3D" id="3.30.420.340">
    <property type="entry name" value="UvrC, RNAse H endonuclease domain"/>
    <property type="match status" value="1"/>
</dbReference>
<dbReference type="HAMAP" id="MF_00203">
    <property type="entry name" value="UvrC"/>
    <property type="match status" value="1"/>
</dbReference>
<dbReference type="InterPro" id="IPR000305">
    <property type="entry name" value="GIY-YIG_endonuc"/>
</dbReference>
<dbReference type="InterPro" id="IPR035901">
    <property type="entry name" value="GIY-YIG_endonuc_sf"/>
</dbReference>
<dbReference type="InterPro" id="IPR047296">
    <property type="entry name" value="GIY-YIG_UvrC_Cho"/>
</dbReference>
<dbReference type="InterPro" id="IPR003583">
    <property type="entry name" value="Hlx-hairpin-Hlx_DNA-bd_motif"/>
</dbReference>
<dbReference type="InterPro" id="IPR010994">
    <property type="entry name" value="RuvA_2-like"/>
</dbReference>
<dbReference type="InterPro" id="IPR001943">
    <property type="entry name" value="UVR_dom"/>
</dbReference>
<dbReference type="InterPro" id="IPR036876">
    <property type="entry name" value="UVR_dom_sf"/>
</dbReference>
<dbReference type="InterPro" id="IPR050066">
    <property type="entry name" value="UvrABC_protein_C"/>
</dbReference>
<dbReference type="InterPro" id="IPR004791">
    <property type="entry name" value="UvrC"/>
</dbReference>
<dbReference type="InterPro" id="IPR001162">
    <property type="entry name" value="UvrC_RNase_H_dom"/>
</dbReference>
<dbReference type="InterPro" id="IPR038476">
    <property type="entry name" value="UvrC_RNase_H_dom_sf"/>
</dbReference>
<dbReference type="NCBIfam" id="TIGR00194">
    <property type="entry name" value="uvrC"/>
    <property type="match status" value="1"/>
</dbReference>
<dbReference type="PANTHER" id="PTHR30562:SF1">
    <property type="entry name" value="UVRABC SYSTEM PROTEIN C"/>
    <property type="match status" value="1"/>
</dbReference>
<dbReference type="PANTHER" id="PTHR30562">
    <property type="entry name" value="UVRC/OXIDOREDUCTASE"/>
    <property type="match status" value="1"/>
</dbReference>
<dbReference type="Pfam" id="PF01541">
    <property type="entry name" value="GIY-YIG"/>
    <property type="match status" value="1"/>
</dbReference>
<dbReference type="Pfam" id="PF14520">
    <property type="entry name" value="HHH_5"/>
    <property type="match status" value="1"/>
</dbReference>
<dbReference type="Pfam" id="PF02151">
    <property type="entry name" value="UVR"/>
    <property type="match status" value="1"/>
</dbReference>
<dbReference type="Pfam" id="PF22920">
    <property type="entry name" value="UvrC_RNaseH"/>
    <property type="match status" value="1"/>
</dbReference>
<dbReference type="Pfam" id="PF08459">
    <property type="entry name" value="UvrC_RNaseH_dom"/>
    <property type="match status" value="1"/>
</dbReference>
<dbReference type="SMART" id="SM00465">
    <property type="entry name" value="GIYc"/>
    <property type="match status" value="1"/>
</dbReference>
<dbReference type="SMART" id="SM00278">
    <property type="entry name" value="HhH1"/>
    <property type="match status" value="2"/>
</dbReference>
<dbReference type="SUPFAM" id="SSF46600">
    <property type="entry name" value="C-terminal UvrC-binding domain of UvrB"/>
    <property type="match status" value="1"/>
</dbReference>
<dbReference type="SUPFAM" id="SSF82771">
    <property type="entry name" value="GIY-YIG endonuclease"/>
    <property type="match status" value="1"/>
</dbReference>
<dbReference type="SUPFAM" id="SSF47781">
    <property type="entry name" value="RuvA domain 2-like"/>
    <property type="match status" value="1"/>
</dbReference>
<dbReference type="PROSITE" id="PS50164">
    <property type="entry name" value="GIY_YIG"/>
    <property type="match status" value="1"/>
</dbReference>
<dbReference type="PROSITE" id="PS50151">
    <property type="entry name" value="UVR"/>
    <property type="match status" value="1"/>
</dbReference>
<dbReference type="PROSITE" id="PS50165">
    <property type="entry name" value="UVRC"/>
    <property type="match status" value="1"/>
</dbReference>
<feature type="chain" id="PRO_0000264926" description="UvrABC system protein C">
    <location>
        <begin position="1"/>
        <end position="608"/>
    </location>
</feature>
<feature type="domain" description="GIY-YIG" evidence="1">
    <location>
        <begin position="18"/>
        <end position="96"/>
    </location>
</feature>
<feature type="domain" description="UVR" evidence="1">
    <location>
        <begin position="206"/>
        <end position="241"/>
    </location>
</feature>